<protein>
    <recommendedName>
        <fullName evidence="1">4-hydroxy-2-oxovalerate aldolase</fullName>
        <shortName evidence="1">HOA</shortName>
        <ecNumber evidence="1">4.1.3.39</ecNumber>
    </recommendedName>
    <alternativeName>
        <fullName evidence="1">4-hydroxy-2-keto-pentanoic acid aldolase</fullName>
    </alternativeName>
    <alternativeName>
        <fullName evidence="1">4-hydroxy-2-oxopentanoate aldolase</fullName>
    </alternativeName>
</protein>
<accession>Q63JB1</accession>
<proteinExistence type="inferred from homology"/>
<name>HOA_BURPS</name>
<comment type="catalytic activity">
    <reaction evidence="1">
        <text>(S)-4-hydroxy-2-oxopentanoate = acetaldehyde + pyruvate</text>
        <dbReference type="Rhea" id="RHEA:22624"/>
        <dbReference type="ChEBI" id="CHEBI:15343"/>
        <dbReference type="ChEBI" id="CHEBI:15361"/>
        <dbReference type="ChEBI" id="CHEBI:73143"/>
        <dbReference type="EC" id="4.1.3.39"/>
    </reaction>
</comment>
<comment type="similarity">
    <text evidence="1">Belongs to the 4-hydroxy-2-oxovalerate aldolase family.</text>
</comment>
<gene>
    <name type="primary">mhpE</name>
    <name type="ordered locus">BPSS1807</name>
</gene>
<keyword id="KW-0058">Aromatic hydrocarbons catabolism</keyword>
<keyword id="KW-0456">Lyase</keyword>
<keyword id="KW-0464">Manganese</keyword>
<keyword id="KW-0479">Metal-binding</keyword>
<keyword id="KW-1185">Reference proteome</keyword>
<evidence type="ECO:0000255" key="1">
    <source>
        <dbReference type="HAMAP-Rule" id="MF_01656"/>
    </source>
</evidence>
<dbReference type="EC" id="4.1.3.39" evidence="1"/>
<dbReference type="EMBL" id="BX571966">
    <property type="protein sequence ID" value="CAH39283.1"/>
    <property type="molecule type" value="Genomic_DNA"/>
</dbReference>
<dbReference type="RefSeq" id="YP_111811.1">
    <property type="nucleotide sequence ID" value="NC_006351.1"/>
</dbReference>
<dbReference type="SMR" id="Q63JB1"/>
<dbReference type="STRING" id="272560.BPSS1807"/>
<dbReference type="KEGG" id="bps:BPSS1807"/>
<dbReference type="PATRIC" id="fig|272560.51.peg.5250"/>
<dbReference type="eggNOG" id="COG0119">
    <property type="taxonomic scope" value="Bacteria"/>
</dbReference>
<dbReference type="Proteomes" id="UP000000605">
    <property type="component" value="Chromosome 2"/>
</dbReference>
<dbReference type="GO" id="GO:0003852">
    <property type="term" value="F:2-isopropylmalate synthase activity"/>
    <property type="evidence" value="ECO:0007669"/>
    <property type="project" value="TreeGrafter"/>
</dbReference>
<dbReference type="GO" id="GO:0008701">
    <property type="term" value="F:4-hydroxy-2-oxovalerate aldolase activity"/>
    <property type="evidence" value="ECO:0007669"/>
    <property type="project" value="UniProtKB-UniRule"/>
</dbReference>
<dbReference type="GO" id="GO:0030145">
    <property type="term" value="F:manganese ion binding"/>
    <property type="evidence" value="ECO:0007669"/>
    <property type="project" value="UniProtKB-UniRule"/>
</dbReference>
<dbReference type="GO" id="GO:0009056">
    <property type="term" value="P:catabolic process"/>
    <property type="evidence" value="ECO:0007669"/>
    <property type="project" value="UniProtKB-KW"/>
</dbReference>
<dbReference type="GO" id="GO:0009098">
    <property type="term" value="P:L-leucine biosynthetic process"/>
    <property type="evidence" value="ECO:0007669"/>
    <property type="project" value="TreeGrafter"/>
</dbReference>
<dbReference type="CDD" id="cd07943">
    <property type="entry name" value="DRE_TIM_HOA"/>
    <property type="match status" value="1"/>
</dbReference>
<dbReference type="Gene3D" id="1.10.8.60">
    <property type="match status" value="1"/>
</dbReference>
<dbReference type="Gene3D" id="3.20.20.70">
    <property type="entry name" value="Aldolase class I"/>
    <property type="match status" value="1"/>
</dbReference>
<dbReference type="HAMAP" id="MF_01656">
    <property type="entry name" value="HOA"/>
    <property type="match status" value="1"/>
</dbReference>
<dbReference type="InterPro" id="IPR050073">
    <property type="entry name" value="2-IPM_HCS-like"/>
</dbReference>
<dbReference type="InterPro" id="IPR017629">
    <property type="entry name" value="4OH_2_O-val_aldolase"/>
</dbReference>
<dbReference type="InterPro" id="IPR013785">
    <property type="entry name" value="Aldolase_TIM"/>
</dbReference>
<dbReference type="InterPro" id="IPR012425">
    <property type="entry name" value="DmpG_comm"/>
</dbReference>
<dbReference type="InterPro" id="IPR035685">
    <property type="entry name" value="DRE_TIM_HOA"/>
</dbReference>
<dbReference type="InterPro" id="IPR000891">
    <property type="entry name" value="PYR_CT"/>
</dbReference>
<dbReference type="NCBIfam" id="TIGR03217">
    <property type="entry name" value="4OH_2_O_val_ald"/>
    <property type="match status" value="1"/>
</dbReference>
<dbReference type="NCBIfam" id="NF006049">
    <property type="entry name" value="PRK08195.1"/>
    <property type="match status" value="1"/>
</dbReference>
<dbReference type="PANTHER" id="PTHR10277:SF9">
    <property type="entry name" value="2-ISOPROPYLMALATE SYNTHASE 1, CHLOROPLASTIC-RELATED"/>
    <property type="match status" value="1"/>
</dbReference>
<dbReference type="PANTHER" id="PTHR10277">
    <property type="entry name" value="HOMOCITRATE SYNTHASE-RELATED"/>
    <property type="match status" value="1"/>
</dbReference>
<dbReference type="Pfam" id="PF07836">
    <property type="entry name" value="DmpG_comm"/>
    <property type="match status" value="1"/>
</dbReference>
<dbReference type="Pfam" id="PF00682">
    <property type="entry name" value="HMGL-like"/>
    <property type="match status" value="1"/>
</dbReference>
<dbReference type="SUPFAM" id="SSF51569">
    <property type="entry name" value="Aldolase"/>
    <property type="match status" value="1"/>
</dbReference>
<dbReference type="SUPFAM" id="SSF89000">
    <property type="entry name" value="post-HMGL domain-like"/>
    <property type="match status" value="1"/>
</dbReference>
<dbReference type="PROSITE" id="PS50991">
    <property type="entry name" value="PYR_CT"/>
    <property type="match status" value="1"/>
</dbReference>
<sequence length="347" mass="37006">MILISDATLRDGNHAIRHQLSAAQIHAYARAADEAGIDVVEVGHGNGLGGSSCLLGQTPISDRLMLETARAALRTSRLGVHFIPGLGKAADISLALEIGVDVVRVATHCTEANVSARFIEQTRAAGRTAFGVLMMSHMAPPDALLAQAKLMERYGAQAVVLMDSAGYSTPSLVRAKVERLVDGLDIDVGFHAHNNLGLAVANSLVALEAGARIVDACVKGFGAGAGNTQLETLVAAMEREGHDTRTTFERVMTLARGTETFLNPKTPHIQPANIASGLYGLFSGYVPHIQKAAQEFGVNEFELYKRLAERKLVAGQEDIIIEEASRLARERDVQRATGGVRVRELSA</sequence>
<feature type="chain" id="PRO_0000387799" description="4-hydroxy-2-oxovalerate aldolase">
    <location>
        <begin position="1"/>
        <end position="347"/>
    </location>
</feature>
<feature type="domain" description="Pyruvate carboxyltransferase" evidence="1">
    <location>
        <begin position="2"/>
        <end position="252"/>
    </location>
</feature>
<feature type="active site" description="Proton acceptor" evidence="1">
    <location>
        <position position="14"/>
    </location>
</feature>
<feature type="binding site" evidence="1">
    <location>
        <begin position="10"/>
        <end position="11"/>
    </location>
    <ligand>
        <name>substrate</name>
    </ligand>
</feature>
<feature type="binding site" evidence="1">
    <location>
        <position position="11"/>
    </location>
    <ligand>
        <name>Mn(2+)</name>
        <dbReference type="ChEBI" id="CHEBI:29035"/>
    </ligand>
</feature>
<feature type="binding site" evidence="1">
    <location>
        <position position="164"/>
    </location>
    <ligand>
        <name>substrate</name>
    </ligand>
</feature>
<feature type="binding site" evidence="1">
    <location>
        <position position="191"/>
    </location>
    <ligand>
        <name>Mn(2+)</name>
        <dbReference type="ChEBI" id="CHEBI:29035"/>
    </ligand>
</feature>
<feature type="binding site" evidence="1">
    <location>
        <position position="191"/>
    </location>
    <ligand>
        <name>substrate</name>
    </ligand>
</feature>
<feature type="binding site" evidence="1">
    <location>
        <position position="193"/>
    </location>
    <ligand>
        <name>Mn(2+)</name>
        <dbReference type="ChEBI" id="CHEBI:29035"/>
    </ligand>
</feature>
<feature type="site" description="Transition state stabilizer" evidence="1">
    <location>
        <position position="10"/>
    </location>
</feature>
<reference key="1">
    <citation type="journal article" date="2004" name="Proc. Natl. Acad. Sci. U.S.A.">
        <title>Genomic plasticity of the causative agent of melioidosis, Burkholderia pseudomallei.</title>
        <authorList>
            <person name="Holden M.T.G."/>
            <person name="Titball R.W."/>
            <person name="Peacock S.J."/>
            <person name="Cerdeno-Tarraga A.-M."/>
            <person name="Atkins T."/>
            <person name="Crossman L.C."/>
            <person name="Pitt T."/>
            <person name="Churcher C."/>
            <person name="Mungall K.L."/>
            <person name="Bentley S.D."/>
            <person name="Sebaihia M."/>
            <person name="Thomson N.R."/>
            <person name="Bason N."/>
            <person name="Beacham I.R."/>
            <person name="Brooks K."/>
            <person name="Brown K.A."/>
            <person name="Brown N.F."/>
            <person name="Challis G.L."/>
            <person name="Cherevach I."/>
            <person name="Chillingworth T."/>
            <person name="Cronin A."/>
            <person name="Crossett B."/>
            <person name="Davis P."/>
            <person name="DeShazer D."/>
            <person name="Feltwell T."/>
            <person name="Fraser A."/>
            <person name="Hance Z."/>
            <person name="Hauser H."/>
            <person name="Holroyd S."/>
            <person name="Jagels K."/>
            <person name="Keith K.E."/>
            <person name="Maddison M."/>
            <person name="Moule S."/>
            <person name="Price C."/>
            <person name="Quail M.A."/>
            <person name="Rabbinowitsch E."/>
            <person name="Rutherford K."/>
            <person name="Sanders M."/>
            <person name="Simmonds M."/>
            <person name="Songsivilai S."/>
            <person name="Stevens K."/>
            <person name="Tumapa S."/>
            <person name="Vesaratchavest M."/>
            <person name="Whitehead S."/>
            <person name="Yeats C."/>
            <person name="Barrell B.G."/>
            <person name="Oyston P.C.F."/>
            <person name="Parkhill J."/>
        </authorList>
    </citation>
    <scope>NUCLEOTIDE SEQUENCE [LARGE SCALE GENOMIC DNA]</scope>
    <source>
        <strain>K96243</strain>
    </source>
</reference>
<organism>
    <name type="scientific">Burkholderia pseudomallei (strain K96243)</name>
    <dbReference type="NCBI Taxonomy" id="272560"/>
    <lineage>
        <taxon>Bacteria</taxon>
        <taxon>Pseudomonadati</taxon>
        <taxon>Pseudomonadota</taxon>
        <taxon>Betaproteobacteria</taxon>
        <taxon>Burkholderiales</taxon>
        <taxon>Burkholderiaceae</taxon>
        <taxon>Burkholderia</taxon>
        <taxon>pseudomallei group</taxon>
    </lineage>
</organism>